<comment type="function">
    <text evidence="1 4 5">Essential for the proper assembly of type I and type II keratin protein complexes and formation of keratin intermediate filaments in the inner root sheath (irs) (PubMed:14996088, PubMed:17920809). Plays a role in the cytoskeleton organization (By similarity).</text>
</comment>
<comment type="subunit">
    <text evidence="1 4 6">Heterodimer of a type I and a type II keratin (PubMed:14996088). Heterodimer with type II keratin KRT5 leading to the formation of keratin intermediate filament (KIF) network. Interacts with KRT6A to form filaments (By similarity).</text>
</comment>
<comment type="subcellular location">
    <subcellularLocation>
        <location evidence="4">Cytoplasm</location>
    </subcellularLocation>
</comment>
<comment type="miscellaneous">
    <text evidence="6">There are two types of cytoskeletal and microfibrillar keratin: I (acidic; 40-55 kDa) and II (neutral to basic; 56-70 kDa).</text>
</comment>
<comment type="similarity">
    <text evidence="3">Belongs to the intermediate filament family.</text>
</comment>
<dbReference type="EMBL" id="AL590991">
    <property type="status" value="NOT_ANNOTATED_CDS"/>
    <property type="molecule type" value="Genomic_DNA"/>
</dbReference>
<dbReference type="EMBL" id="BC018391">
    <property type="protein sequence ID" value="AAH18391.1"/>
    <property type="molecule type" value="mRNA"/>
</dbReference>
<dbReference type="CCDS" id="CCDS25377.1"/>
<dbReference type="RefSeq" id="NP_598491.1">
    <property type="nucleotide sequence ID" value="NM_133730.2"/>
</dbReference>
<dbReference type="SMR" id="Q8VCW2"/>
<dbReference type="BioGRID" id="214269">
    <property type="interactions" value="1"/>
</dbReference>
<dbReference type="ComplexPortal" id="CPX-5869">
    <property type="entry name" value="Keratin-25 - Keratin-71 dimer complex"/>
</dbReference>
<dbReference type="FunCoup" id="Q8VCW2">
    <property type="interactions" value="149"/>
</dbReference>
<dbReference type="STRING" id="10090.ENSMUSP00000048439"/>
<dbReference type="PhosphoSitePlus" id="Q8VCW2"/>
<dbReference type="jPOST" id="Q8VCW2"/>
<dbReference type="PaxDb" id="10090-ENSMUSP00000048439"/>
<dbReference type="PeptideAtlas" id="Q8VCW2"/>
<dbReference type="ProteomicsDB" id="268937"/>
<dbReference type="Antibodypedia" id="57604">
    <property type="antibodies" value="99 antibodies from 18 providers"/>
</dbReference>
<dbReference type="DNASU" id="70810"/>
<dbReference type="Ensembl" id="ENSMUST00000038004.3">
    <property type="protein sequence ID" value="ENSMUSP00000048439.3"/>
    <property type="gene ID" value="ENSMUSG00000035831.3"/>
</dbReference>
<dbReference type="GeneID" id="70810"/>
<dbReference type="KEGG" id="mmu:70810"/>
<dbReference type="UCSC" id="uc007lin.1">
    <property type="organism name" value="mouse"/>
</dbReference>
<dbReference type="AGR" id="MGI:1918060"/>
<dbReference type="CTD" id="147183"/>
<dbReference type="MGI" id="MGI:1918060">
    <property type="gene designation" value="Krt25"/>
</dbReference>
<dbReference type="VEuPathDB" id="HostDB:ENSMUSG00000035831"/>
<dbReference type="eggNOG" id="ENOG502SKJN">
    <property type="taxonomic scope" value="Eukaryota"/>
</dbReference>
<dbReference type="GeneTree" id="ENSGT00940000161994"/>
<dbReference type="HOGENOM" id="CLU_012560_8_3_1"/>
<dbReference type="InParanoid" id="Q8VCW2"/>
<dbReference type="OMA" id="TGNSCGI"/>
<dbReference type="OrthoDB" id="2441647at2759"/>
<dbReference type="PhylomeDB" id="Q8VCW2"/>
<dbReference type="TreeFam" id="TF332742"/>
<dbReference type="Reactome" id="R-MMU-6805567">
    <property type="pathway name" value="Keratinization"/>
</dbReference>
<dbReference type="Reactome" id="R-MMU-6809371">
    <property type="pathway name" value="Formation of the cornified envelope"/>
</dbReference>
<dbReference type="BioGRID-ORCS" id="70810">
    <property type="hits" value="2 hits in 75 CRISPR screens"/>
</dbReference>
<dbReference type="ChiTaRS" id="Krt25">
    <property type="organism name" value="mouse"/>
</dbReference>
<dbReference type="PRO" id="PR:Q8VCW2"/>
<dbReference type="Proteomes" id="UP000000589">
    <property type="component" value="Chromosome 11"/>
</dbReference>
<dbReference type="RNAct" id="Q8VCW2">
    <property type="molecule type" value="protein"/>
</dbReference>
<dbReference type="Bgee" id="ENSMUSG00000035831">
    <property type="expression patterns" value="Expressed in hair follicle and 53 other cell types or tissues"/>
</dbReference>
<dbReference type="GO" id="GO:0005737">
    <property type="term" value="C:cytoplasm"/>
    <property type="evidence" value="ECO:0007669"/>
    <property type="project" value="UniProtKB-SubCell"/>
</dbReference>
<dbReference type="GO" id="GO:0045095">
    <property type="term" value="C:keratin filament"/>
    <property type="evidence" value="ECO:0000266"/>
    <property type="project" value="ComplexPortal"/>
</dbReference>
<dbReference type="GO" id="GO:0046982">
    <property type="term" value="F:protein heterodimerization activity"/>
    <property type="evidence" value="ECO:0000250"/>
    <property type="project" value="UniProtKB"/>
</dbReference>
<dbReference type="GO" id="GO:0005198">
    <property type="term" value="F:structural molecule activity"/>
    <property type="evidence" value="ECO:0007669"/>
    <property type="project" value="InterPro"/>
</dbReference>
<dbReference type="GO" id="GO:0007010">
    <property type="term" value="P:cytoskeleton organization"/>
    <property type="evidence" value="ECO:0000250"/>
    <property type="project" value="UniProtKB"/>
</dbReference>
<dbReference type="GO" id="GO:0031069">
    <property type="term" value="P:hair follicle morphogenesis"/>
    <property type="evidence" value="ECO:0000315"/>
    <property type="project" value="MGI"/>
</dbReference>
<dbReference type="GO" id="GO:0045109">
    <property type="term" value="P:intermediate filament organization"/>
    <property type="evidence" value="ECO:0000315"/>
    <property type="project" value="MGI"/>
</dbReference>
<dbReference type="FunFam" id="1.20.5.1160:FF:000002">
    <property type="entry name" value="Type I keratin 10"/>
    <property type="match status" value="1"/>
</dbReference>
<dbReference type="FunFam" id="1.20.5.170:FF:000002">
    <property type="entry name" value="Type I keratin KA11"/>
    <property type="match status" value="1"/>
</dbReference>
<dbReference type="FunFam" id="1.20.5.500:FF:000001">
    <property type="entry name" value="Type II keratin 23"/>
    <property type="match status" value="1"/>
</dbReference>
<dbReference type="Gene3D" id="1.20.5.170">
    <property type="match status" value="1"/>
</dbReference>
<dbReference type="Gene3D" id="1.20.5.500">
    <property type="entry name" value="Single helix bin"/>
    <property type="match status" value="1"/>
</dbReference>
<dbReference type="Gene3D" id="1.20.5.1160">
    <property type="entry name" value="Vasodilator-stimulated phosphoprotein"/>
    <property type="match status" value="1"/>
</dbReference>
<dbReference type="InterPro" id="IPR039008">
    <property type="entry name" value="IF_rod_dom"/>
</dbReference>
<dbReference type="InterPro" id="IPR002957">
    <property type="entry name" value="Keratin_I"/>
</dbReference>
<dbReference type="PANTHER" id="PTHR23239">
    <property type="entry name" value="INTERMEDIATE FILAMENT"/>
    <property type="match status" value="1"/>
</dbReference>
<dbReference type="PANTHER" id="PTHR23239:SF160">
    <property type="entry name" value="KERATIN, TYPE I CYTOSKELETAL 25"/>
    <property type="match status" value="1"/>
</dbReference>
<dbReference type="Pfam" id="PF00038">
    <property type="entry name" value="Filament"/>
    <property type="match status" value="1"/>
</dbReference>
<dbReference type="PRINTS" id="PR01248">
    <property type="entry name" value="TYPE1KERATIN"/>
</dbReference>
<dbReference type="SMART" id="SM01391">
    <property type="entry name" value="Filament"/>
    <property type="match status" value="1"/>
</dbReference>
<dbReference type="SUPFAM" id="SSF64593">
    <property type="entry name" value="Intermediate filament protein, coiled coil region"/>
    <property type="match status" value="2"/>
</dbReference>
<dbReference type="PROSITE" id="PS51842">
    <property type="entry name" value="IF_ROD_2"/>
    <property type="match status" value="1"/>
</dbReference>
<feature type="chain" id="PRO_0000312692" description="Keratin, type I cytoskeletal 25">
    <location>
        <begin position="1"/>
        <end position="446"/>
    </location>
</feature>
<feature type="domain" description="IF rod" evidence="3">
    <location>
        <begin position="75"/>
        <end position="390"/>
    </location>
</feature>
<feature type="region of interest" description="Head" evidence="2">
    <location>
        <begin position="1"/>
        <end position="74"/>
    </location>
</feature>
<feature type="region of interest" description="Coil 1A" evidence="2">
    <location>
        <begin position="75"/>
        <end position="110"/>
    </location>
</feature>
<feature type="region of interest" description="Linker 1" evidence="2">
    <location>
        <begin position="111"/>
        <end position="132"/>
    </location>
</feature>
<feature type="region of interest" description="Coil 1B" evidence="2">
    <location>
        <begin position="133"/>
        <end position="224"/>
    </location>
</feature>
<feature type="region of interest" description="Linker 12" evidence="2">
    <location>
        <begin position="225"/>
        <end position="247"/>
    </location>
</feature>
<feature type="region of interest" description="Coil 2" evidence="2">
    <location>
        <begin position="248"/>
        <end position="386"/>
    </location>
</feature>
<feature type="region of interest" description="Tail" evidence="2">
    <location>
        <begin position="387"/>
        <end position="446"/>
    </location>
</feature>
<feature type="modified residue" description="Phosphoserine" evidence="1">
    <location>
        <position position="438"/>
    </location>
</feature>
<feature type="mutagenesis site" description="In Rex mutant M100573; mice exhibit curly hair and vibrissae. The diameter of the hair shaft is irregular due to morphological abnormalities in all three layers of the irs." evidence="5">
    <original>Y</original>
    <variation>N</variation>
    <location>
        <position position="379"/>
    </location>
</feature>
<feature type="mutagenesis site" description="In Rex mutant Re; mice exhibit curly hair and vibrissae. The diameter of the hair shaft is irregular due to morphological abnormalities in all three layers of the irs." evidence="5">
    <original>L</original>
    <variation>P</variation>
    <location>
        <position position="381"/>
    </location>
</feature>
<organism>
    <name type="scientific">Mus musculus</name>
    <name type="common">Mouse</name>
    <dbReference type="NCBI Taxonomy" id="10090"/>
    <lineage>
        <taxon>Eukaryota</taxon>
        <taxon>Metazoa</taxon>
        <taxon>Chordata</taxon>
        <taxon>Craniata</taxon>
        <taxon>Vertebrata</taxon>
        <taxon>Euteleostomi</taxon>
        <taxon>Mammalia</taxon>
        <taxon>Eutheria</taxon>
        <taxon>Euarchontoglires</taxon>
        <taxon>Glires</taxon>
        <taxon>Rodentia</taxon>
        <taxon>Myomorpha</taxon>
        <taxon>Muroidea</taxon>
        <taxon>Muridae</taxon>
        <taxon>Murinae</taxon>
        <taxon>Mus</taxon>
        <taxon>Mus</taxon>
    </lineage>
</organism>
<reference evidence="6" key="1">
    <citation type="journal article" date="2007" name="Genomics">
        <title>Mutations in the helix termination motif of mouse type I IRS keratin genes impair the assembly of keratin intermediate filament.</title>
        <authorList>
            <person name="Tanaka S."/>
            <person name="Miura I."/>
            <person name="Yoshiki A."/>
            <person name="Kato Y."/>
            <person name="Yokoyama H."/>
            <person name="Shinogi A."/>
            <person name="Masuya H."/>
            <person name="Wakana S."/>
            <person name="Tamura M."/>
            <person name="Shiroishi T."/>
        </authorList>
    </citation>
    <scope>NUCLEOTIDE SEQUENCE [MRNA]</scope>
    <scope>FUNCTION</scope>
    <scope>MUTAGENESIS OF TYR-379 AND LEU-381</scope>
    <source>
        <strain evidence="5">C57BL/6J</strain>
        <tissue evidence="5">Skin</tissue>
    </source>
</reference>
<reference key="2">
    <citation type="journal article" date="2009" name="PLoS Biol.">
        <title>Lineage-specific biology revealed by a finished genome assembly of the mouse.</title>
        <authorList>
            <person name="Church D.M."/>
            <person name="Goodstadt L."/>
            <person name="Hillier L.W."/>
            <person name="Zody M.C."/>
            <person name="Goldstein S."/>
            <person name="She X."/>
            <person name="Bult C.J."/>
            <person name="Agarwala R."/>
            <person name="Cherry J.L."/>
            <person name="DiCuccio M."/>
            <person name="Hlavina W."/>
            <person name="Kapustin Y."/>
            <person name="Meric P."/>
            <person name="Maglott D."/>
            <person name="Birtle Z."/>
            <person name="Marques A.C."/>
            <person name="Graves T."/>
            <person name="Zhou S."/>
            <person name="Teague B."/>
            <person name="Potamousis K."/>
            <person name="Churas C."/>
            <person name="Place M."/>
            <person name="Herschleb J."/>
            <person name="Runnheim R."/>
            <person name="Forrest D."/>
            <person name="Amos-Landgraf J."/>
            <person name="Schwartz D.C."/>
            <person name="Cheng Z."/>
            <person name="Lindblad-Toh K."/>
            <person name="Eichler E.E."/>
            <person name="Ponting C.P."/>
        </authorList>
    </citation>
    <scope>NUCLEOTIDE SEQUENCE [LARGE SCALE GENOMIC DNA]</scope>
    <source>
        <strain>C57BL/6J</strain>
    </source>
</reference>
<reference evidence="7" key="3">
    <citation type="journal article" date="2004" name="Genome Res.">
        <title>The status, quality, and expansion of the NIH full-length cDNA project: the Mammalian Gene Collection (MGC).</title>
        <authorList>
            <consortium name="The MGC Project Team"/>
        </authorList>
    </citation>
    <scope>NUCLEOTIDE SEQUENCE [LARGE SCALE MRNA]</scope>
    <source>
        <strain evidence="7">FVB/N</strain>
        <tissue evidence="7">Salivary gland</tissue>
    </source>
</reference>
<reference evidence="6" key="4">
    <citation type="journal article" date="2004" name="Br. J. Dermatol.">
        <title>Functional analysis of keratin components in the mouse hair follicle inner root sheath.</title>
        <authorList>
            <person name="Porter R.M."/>
            <person name="Gandhi M."/>
            <person name="Wilson N.J."/>
            <person name="Wood P."/>
            <person name="McLean W.H.I."/>
            <person name="Lane E.B."/>
        </authorList>
    </citation>
    <scope>FUNCTION</scope>
    <scope>SUBUNIT</scope>
    <scope>SUBCELLULAR LOCATION</scope>
</reference>
<sequence length="446" mass="48921">MSLRLSSGSRRSYARPSTGSLRGASFGAGNACGVAGIGSGFSCAFGGSSTGGNTGVANSCAGFTVNEGGLLSGNEKVTMQNLNDRLASYLDNVQALQEANADLEQKIKGWYEKFGPGSCRGLDHDYSRYFPIIDDLKNQIITSTTSNANAVLQIDNARLTADDFRLKYENELALHQSVEADVNGLRRVLDEITLCRTDLEIQYETLSEELTYLKKNHKEEMQALQCAAGGNVNVEMNAAPGVDLTVLLNNMRAEYEALAEQNRRDAEAWFQEKSASLQQQITEDVGATTSARNELTEMKRTLQTLEIELQSLLATKHSLECSLTETEGNYCTQLAQIQAQISALEEQLHQVRTETEGQKLEYEQLLNVKAHLEKEIETYCLLIGGDEGACKSSSYKSKDYGSGNAGNQIKDPVKAIVVKKVLEEVDQRSKILTTRLHSLEEKSQSN</sequence>
<name>K1C25_MOUSE</name>
<protein>
    <recommendedName>
        <fullName>Keratin, type I cytoskeletal 25</fullName>
    </recommendedName>
    <alternativeName>
        <fullName>Cytokeratin-25</fullName>
        <shortName>CK-25</shortName>
    </alternativeName>
    <alternativeName>
        <fullName>Keratin-25</fullName>
        <shortName>K25</shortName>
    </alternativeName>
    <alternativeName>
        <fullName>Type I inner root sheath-specific keratin-K25irs1</fullName>
        <shortName>mIRSa1</shortName>
    </alternativeName>
</protein>
<keyword id="KW-0175">Coiled coil</keyword>
<keyword id="KW-0963">Cytoplasm</keyword>
<keyword id="KW-0403">Intermediate filament</keyword>
<keyword id="KW-0416">Keratin</keyword>
<keyword id="KW-0597">Phosphoprotein</keyword>
<keyword id="KW-1185">Reference proteome</keyword>
<accession>Q8VCW2</accession>
<evidence type="ECO:0000250" key="1">
    <source>
        <dbReference type="UniProtKB" id="Q7Z3Z0"/>
    </source>
</evidence>
<evidence type="ECO:0000255" key="2"/>
<evidence type="ECO:0000255" key="3">
    <source>
        <dbReference type="PROSITE-ProRule" id="PRU01188"/>
    </source>
</evidence>
<evidence type="ECO:0000269" key="4">
    <source>
    </source>
</evidence>
<evidence type="ECO:0000269" key="5">
    <source>
    </source>
</evidence>
<evidence type="ECO:0000305" key="6"/>
<evidence type="ECO:0000312" key="7">
    <source>
        <dbReference type="EMBL" id="AAH18391.1"/>
    </source>
</evidence>
<evidence type="ECO:0000312" key="8">
    <source>
        <dbReference type="MGI" id="MGI:1918060"/>
    </source>
</evidence>
<gene>
    <name evidence="7 8" type="primary">Krt25</name>
</gene>
<proteinExistence type="evidence at protein level"/>